<protein>
    <recommendedName>
        <fullName>UPF0401 protein c4569</fullName>
    </recommendedName>
</protein>
<gene>
    <name type="ordered locus">c4569</name>
</gene>
<feature type="chain" id="PRO_0000268747" description="UPF0401 protein c4569">
    <location>
        <begin position="1"/>
        <end position="77"/>
    </location>
</feature>
<evidence type="ECO:0000305" key="1"/>
<keyword id="KW-1185">Reference proteome</keyword>
<sequence length="77" mass="8816">MSDCHPVLLPEGPFSREQAVAVTTAYRNVLIEDDQGTHFRLVIRNAEGQLRWRCWNFEPDAGKQLNSYLASEGILRQ</sequence>
<organism>
    <name type="scientific">Escherichia coli O6:H1 (strain CFT073 / ATCC 700928 / UPEC)</name>
    <dbReference type="NCBI Taxonomy" id="199310"/>
    <lineage>
        <taxon>Bacteria</taxon>
        <taxon>Pseudomonadati</taxon>
        <taxon>Pseudomonadota</taxon>
        <taxon>Gammaproteobacteria</taxon>
        <taxon>Enterobacterales</taxon>
        <taxon>Enterobacteriaceae</taxon>
        <taxon>Escherichia</taxon>
    </lineage>
</organism>
<comment type="similarity">
    <text evidence="1">Belongs to the UPF0401 family.</text>
</comment>
<name>Y4569_ECOL6</name>
<accession>Q8FBZ5</accession>
<proteinExistence type="inferred from homology"/>
<reference key="1">
    <citation type="journal article" date="2002" name="Proc. Natl. Acad. Sci. U.S.A.">
        <title>Extensive mosaic structure revealed by the complete genome sequence of uropathogenic Escherichia coli.</title>
        <authorList>
            <person name="Welch R.A."/>
            <person name="Burland V."/>
            <person name="Plunkett G. III"/>
            <person name="Redford P."/>
            <person name="Roesch P."/>
            <person name="Rasko D."/>
            <person name="Buckles E.L."/>
            <person name="Liou S.-R."/>
            <person name="Boutin A."/>
            <person name="Hackett J."/>
            <person name="Stroud D."/>
            <person name="Mayhew G.F."/>
            <person name="Rose D.J."/>
            <person name="Zhou S."/>
            <person name="Schwartz D.C."/>
            <person name="Perna N.T."/>
            <person name="Mobley H.L.T."/>
            <person name="Donnenberg M.S."/>
            <person name="Blattner F.R."/>
        </authorList>
    </citation>
    <scope>NUCLEOTIDE SEQUENCE [LARGE SCALE GENOMIC DNA]</scope>
    <source>
        <strain>CFT073 / ATCC 700928 / UPEC</strain>
    </source>
</reference>
<dbReference type="EMBL" id="AE014075">
    <property type="protein sequence ID" value="AAN83003.1"/>
    <property type="molecule type" value="Genomic_DNA"/>
</dbReference>
<dbReference type="RefSeq" id="WP_001278287.1">
    <property type="nucleotide sequence ID" value="NZ_CP051263.1"/>
</dbReference>
<dbReference type="SMR" id="Q8FBZ5"/>
<dbReference type="STRING" id="199310.c4569"/>
<dbReference type="KEGG" id="ecc:c4569"/>
<dbReference type="eggNOG" id="ENOG50332RS">
    <property type="taxonomic scope" value="Bacteria"/>
</dbReference>
<dbReference type="HOGENOM" id="CLU_182912_1_0_6"/>
<dbReference type="BioCyc" id="ECOL199310:C4569-MONOMER"/>
<dbReference type="Proteomes" id="UP000001410">
    <property type="component" value="Chromosome"/>
</dbReference>
<dbReference type="Gene3D" id="3.30.160.130">
    <property type="entry name" value="ykff protein like domains"/>
    <property type="match status" value="1"/>
</dbReference>
<dbReference type="InterPro" id="IPR009253">
    <property type="entry name" value="DUF905"/>
</dbReference>
<dbReference type="InterPro" id="IPR038612">
    <property type="entry name" value="YkfF-like_sf"/>
</dbReference>
<dbReference type="Pfam" id="PF06006">
    <property type="entry name" value="DUF905"/>
    <property type="match status" value="1"/>
</dbReference>
<dbReference type="SUPFAM" id="SSF54786">
    <property type="entry name" value="YcfA/nrd intein domain"/>
    <property type="match status" value="1"/>
</dbReference>